<evidence type="ECO:0000255" key="1">
    <source>
        <dbReference type="HAMAP-Rule" id="MF_00219"/>
    </source>
</evidence>
<dbReference type="EC" id="3.5.2.3" evidence="1"/>
<dbReference type="EMBL" id="CP000305">
    <property type="protein sequence ID" value="ABG18371.1"/>
    <property type="molecule type" value="Genomic_DNA"/>
</dbReference>
<dbReference type="EMBL" id="ACNQ01000012">
    <property type="protein sequence ID" value="EEO76520.1"/>
    <property type="molecule type" value="Genomic_DNA"/>
</dbReference>
<dbReference type="RefSeq" id="WP_002213109.1">
    <property type="nucleotide sequence ID" value="NZ_ACNQ01000012.1"/>
</dbReference>
<dbReference type="SMR" id="Q1CI09"/>
<dbReference type="GeneID" id="57976984"/>
<dbReference type="KEGG" id="ypn:YPN_2042"/>
<dbReference type="HOGENOM" id="CLU_041558_1_0_6"/>
<dbReference type="UniPathway" id="UPA00070">
    <property type="reaction ID" value="UER00117"/>
</dbReference>
<dbReference type="Proteomes" id="UP000008936">
    <property type="component" value="Chromosome"/>
</dbReference>
<dbReference type="GO" id="GO:0005829">
    <property type="term" value="C:cytosol"/>
    <property type="evidence" value="ECO:0007669"/>
    <property type="project" value="TreeGrafter"/>
</dbReference>
<dbReference type="GO" id="GO:0004151">
    <property type="term" value="F:dihydroorotase activity"/>
    <property type="evidence" value="ECO:0007669"/>
    <property type="project" value="UniProtKB-UniRule"/>
</dbReference>
<dbReference type="GO" id="GO:0008270">
    <property type="term" value="F:zinc ion binding"/>
    <property type="evidence" value="ECO:0007669"/>
    <property type="project" value="UniProtKB-UniRule"/>
</dbReference>
<dbReference type="GO" id="GO:0006207">
    <property type="term" value="P:'de novo' pyrimidine nucleobase biosynthetic process"/>
    <property type="evidence" value="ECO:0007669"/>
    <property type="project" value="TreeGrafter"/>
</dbReference>
<dbReference type="GO" id="GO:0044205">
    <property type="term" value="P:'de novo' UMP biosynthetic process"/>
    <property type="evidence" value="ECO:0007669"/>
    <property type="project" value="UniProtKB-UniRule"/>
</dbReference>
<dbReference type="CDD" id="cd01294">
    <property type="entry name" value="DHOase"/>
    <property type="match status" value="1"/>
</dbReference>
<dbReference type="FunFam" id="3.20.20.140:FF:000006">
    <property type="entry name" value="Dihydroorotase"/>
    <property type="match status" value="1"/>
</dbReference>
<dbReference type="Gene3D" id="3.20.20.140">
    <property type="entry name" value="Metal-dependent hydrolases"/>
    <property type="match status" value="1"/>
</dbReference>
<dbReference type="HAMAP" id="MF_00219">
    <property type="entry name" value="PyrC_classII"/>
    <property type="match status" value="1"/>
</dbReference>
<dbReference type="InterPro" id="IPR006680">
    <property type="entry name" value="Amidohydro-rel"/>
</dbReference>
<dbReference type="InterPro" id="IPR004721">
    <property type="entry name" value="DHOdimr"/>
</dbReference>
<dbReference type="InterPro" id="IPR002195">
    <property type="entry name" value="Dihydroorotase_CS"/>
</dbReference>
<dbReference type="InterPro" id="IPR032466">
    <property type="entry name" value="Metal_Hydrolase"/>
</dbReference>
<dbReference type="NCBIfam" id="TIGR00856">
    <property type="entry name" value="pyrC_dimer"/>
    <property type="match status" value="1"/>
</dbReference>
<dbReference type="PANTHER" id="PTHR43137">
    <property type="entry name" value="DIHYDROOROTASE"/>
    <property type="match status" value="1"/>
</dbReference>
<dbReference type="PANTHER" id="PTHR43137:SF1">
    <property type="entry name" value="DIHYDROOROTASE"/>
    <property type="match status" value="1"/>
</dbReference>
<dbReference type="Pfam" id="PF01979">
    <property type="entry name" value="Amidohydro_1"/>
    <property type="match status" value="1"/>
</dbReference>
<dbReference type="PIRSF" id="PIRSF001237">
    <property type="entry name" value="DHOdimr"/>
    <property type="match status" value="1"/>
</dbReference>
<dbReference type="SUPFAM" id="SSF51556">
    <property type="entry name" value="Metallo-dependent hydrolases"/>
    <property type="match status" value="1"/>
</dbReference>
<dbReference type="PROSITE" id="PS00483">
    <property type="entry name" value="DIHYDROOROTASE_2"/>
    <property type="match status" value="1"/>
</dbReference>
<comment type="function">
    <text evidence="1">Catalyzes the reversible cyclization of carbamoyl aspartate to dihydroorotate.</text>
</comment>
<comment type="catalytic activity">
    <reaction evidence="1">
        <text>(S)-dihydroorotate + H2O = N-carbamoyl-L-aspartate + H(+)</text>
        <dbReference type="Rhea" id="RHEA:24296"/>
        <dbReference type="ChEBI" id="CHEBI:15377"/>
        <dbReference type="ChEBI" id="CHEBI:15378"/>
        <dbReference type="ChEBI" id="CHEBI:30864"/>
        <dbReference type="ChEBI" id="CHEBI:32814"/>
        <dbReference type="EC" id="3.5.2.3"/>
    </reaction>
</comment>
<comment type="cofactor">
    <cofactor evidence="1">
        <name>Zn(2+)</name>
        <dbReference type="ChEBI" id="CHEBI:29105"/>
    </cofactor>
    <text evidence="1">Binds 2 Zn(2+) ions per subunit.</text>
</comment>
<comment type="pathway">
    <text evidence="1">Pyrimidine metabolism; UMP biosynthesis via de novo pathway; (S)-dihydroorotate from bicarbonate: step 3/3.</text>
</comment>
<comment type="subunit">
    <text evidence="1">Homodimer.</text>
</comment>
<comment type="similarity">
    <text evidence="1">Belongs to the metallo-dependent hydrolases superfamily. DHOase family. Class II DHOase subfamily.</text>
</comment>
<accession>Q1CI09</accession>
<accession>C4GU08</accession>
<protein>
    <recommendedName>
        <fullName evidence="1">Dihydroorotase</fullName>
        <shortName evidence="1">DHOase</shortName>
        <ecNumber evidence="1">3.5.2.3</ecNumber>
    </recommendedName>
</protein>
<sequence length="348" mass="38542">MTAQPQTLKIRRPDDWHIHLRDDEMLSTVLPYTSEVFARAIVMPNLAQPITTVASAIAYRERILAAVPAGHKFTPLMTCYLTNSLDAKELTTGFEQGVFTAAKLYPANATTNSTHGVSDIPAIYPLFEQMQKIGMPLLIHGEVTDAAVDIFDREARFIDQILEPIRQKFPELKIVFEHITTKDAADYVLAGNRFLGATVTPQHLMFNRNHMLVGGIRPHLFCLPILKRSTHQQALRAAVASGSDRFFLGTDSAPHAKHRKESSCGCAGVFNAPAALPAYASVFEELNALQHLEAFCALNGPRFYGLPVNDDVVELVRTPFLQPEEIPLGNESVIPFLAGQTLNWSVKR</sequence>
<keyword id="KW-0378">Hydrolase</keyword>
<keyword id="KW-0479">Metal-binding</keyword>
<keyword id="KW-0665">Pyrimidine biosynthesis</keyword>
<keyword id="KW-0862">Zinc</keyword>
<gene>
    <name evidence="1" type="primary">pyrC</name>
    <name type="ordered locus">YPN_2042</name>
    <name type="ORF">YP516_2274</name>
</gene>
<organism>
    <name type="scientific">Yersinia pestis bv. Antiqua (strain Nepal516)</name>
    <dbReference type="NCBI Taxonomy" id="377628"/>
    <lineage>
        <taxon>Bacteria</taxon>
        <taxon>Pseudomonadati</taxon>
        <taxon>Pseudomonadota</taxon>
        <taxon>Gammaproteobacteria</taxon>
        <taxon>Enterobacterales</taxon>
        <taxon>Yersiniaceae</taxon>
        <taxon>Yersinia</taxon>
    </lineage>
</organism>
<feature type="chain" id="PRO_1000024075" description="Dihydroorotase">
    <location>
        <begin position="1"/>
        <end position="348"/>
    </location>
</feature>
<feature type="active site" evidence="1">
    <location>
        <position position="251"/>
    </location>
</feature>
<feature type="binding site" evidence="1">
    <location>
        <position position="17"/>
    </location>
    <ligand>
        <name>Zn(2+)</name>
        <dbReference type="ChEBI" id="CHEBI:29105"/>
        <label>1</label>
    </ligand>
</feature>
<feature type="binding site" evidence="1">
    <location>
        <begin position="19"/>
        <end position="21"/>
    </location>
    <ligand>
        <name>substrate</name>
    </ligand>
</feature>
<feature type="binding site" evidence="1">
    <location>
        <position position="19"/>
    </location>
    <ligand>
        <name>Zn(2+)</name>
        <dbReference type="ChEBI" id="CHEBI:29105"/>
        <label>1</label>
    </ligand>
</feature>
<feature type="binding site" evidence="1">
    <location>
        <position position="45"/>
    </location>
    <ligand>
        <name>substrate</name>
    </ligand>
</feature>
<feature type="binding site" description="via carbamate group" evidence="1">
    <location>
        <position position="103"/>
    </location>
    <ligand>
        <name>Zn(2+)</name>
        <dbReference type="ChEBI" id="CHEBI:29105"/>
        <label>1</label>
    </ligand>
</feature>
<feature type="binding site" description="via carbamate group" evidence="1">
    <location>
        <position position="103"/>
    </location>
    <ligand>
        <name>Zn(2+)</name>
        <dbReference type="ChEBI" id="CHEBI:29105"/>
        <label>2</label>
    </ligand>
</feature>
<feature type="binding site" evidence="1">
    <location>
        <position position="140"/>
    </location>
    <ligand>
        <name>substrate</name>
    </ligand>
</feature>
<feature type="binding site" evidence="1">
    <location>
        <position position="140"/>
    </location>
    <ligand>
        <name>Zn(2+)</name>
        <dbReference type="ChEBI" id="CHEBI:29105"/>
        <label>2</label>
    </ligand>
</feature>
<feature type="binding site" evidence="1">
    <location>
        <position position="178"/>
    </location>
    <ligand>
        <name>Zn(2+)</name>
        <dbReference type="ChEBI" id="CHEBI:29105"/>
        <label>2</label>
    </ligand>
</feature>
<feature type="binding site" evidence="1">
    <location>
        <position position="223"/>
    </location>
    <ligand>
        <name>substrate</name>
    </ligand>
</feature>
<feature type="binding site" evidence="1">
    <location>
        <position position="251"/>
    </location>
    <ligand>
        <name>Zn(2+)</name>
        <dbReference type="ChEBI" id="CHEBI:29105"/>
        <label>1</label>
    </ligand>
</feature>
<feature type="binding site" evidence="1">
    <location>
        <position position="255"/>
    </location>
    <ligand>
        <name>substrate</name>
    </ligand>
</feature>
<feature type="binding site" evidence="1">
    <location>
        <position position="267"/>
    </location>
    <ligand>
        <name>substrate</name>
    </ligand>
</feature>
<feature type="modified residue" description="N6-carboxylysine" evidence="1">
    <location>
        <position position="103"/>
    </location>
</feature>
<proteinExistence type="inferred from homology"/>
<reference key="1">
    <citation type="journal article" date="2006" name="J. Bacteriol.">
        <title>Complete genome sequence of Yersinia pestis strains Antiqua and Nepal516: evidence of gene reduction in an emerging pathogen.</title>
        <authorList>
            <person name="Chain P.S.G."/>
            <person name="Hu P."/>
            <person name="Malfatti S.A."/>
            <person name="Radnedge L."/>
            <person name="Larimer F."/>
            <person name="Vergez L.M."/>
            <person name="Worsham P."/>
            <person name="Chu M.C."/>
            <person name="Andersen G.L."/>
        </authorList>
    </citation>
    <scope>NUCLEOTIDE SEQUENCE [LARGE SCALE GENOMIC DNA]</scope>
    <source>
        <strain>Nepal516</strain>
    </source>
</reference>
<reference key="2">
    <citation type="submission" date="2009-04" db="EMBL/GenBank/DDBJ databases">
        <title>Yersinia pestis Nepal516A whole genome shotgun sequencing project.</title>
        <authorList>
            <person name="Plunkett G. III"/>
            <person name="Anderson B.D."/>
            <person name="Baumler D.J."/>
            <person name="Burland V."/>
            <person name="Cabot E.L."/>
            <person name="Glasner J.D."/>
            <person name="Mau B."/>
            <person name="Neeno-Eckwall E."/>
            <person name="Perna N.T."/>
            <person name="Munk A.C."/>
            <person name="Tapia R."/>
            <person name="Green L.D."/>
            <person name="Rogers Y.C."/>
            <person name="Detter J.C."/>
            <person name="Bruce D.C."/>
            <person name="Brettin T.S."/>
        </authorList>
    </citation>
    <scope>NUCLEOTIDE SEQUENCE [LARGE SCALE GENOMIC DNA]</scope>
    <source>
        <strain>Nepal516</strain>
    </source>
</reference>
<name>PYRC_YERPN</name>